<dbReference type="EC" id="2.3.1.180" evidence="1"/>
<dbReference type="EMBL" id="CP000425">
    <property type="protein sequence ID" value="ABJ72374.1"/>
    <property type="molecule type" value="Genomic_DNA"/>
</dbReference>
<dbReference type="RefSeq" id="WP_011675741.1">
    <property type="nucleotide sequence ID" value="NC_008527.1"/>
</dbReference>
<dbReference type="SMR" id="Q030J8"/>
<dbReference type="KEGG" id="llc:LACR_0821"/>
<dbReference type="HOGENOM" id="CLU_039592_4_1_9"/>
<dbReference type="UniPathway" id="UPA00094"/>
<dbReference type="Proteomes" id="UP000000240">
    <property type="component" value="Chromosome"/>
</dbReference>
<dbReference type="GO" id="GO:0005737">
    <property type="term" value="C:cytoplasm"/>
    <property type="evidence" value="ECO:0007669"/>
    <property type="project" value="UniProtKB-SubCell"/>
</dbReference>
<dbReference type="GO" id="GO:0004315">
    <property type="term" value="F:3-oxoacyl-[acyl-carrier-protein] synthase activity"/>
    <property type="evidence" value="ECO:0007669"/>
    <property type="project" value="InterPro"/>
</dbReference>
<dbReference type="GO" id="GO:0033818">
    <property type="term" value="F:beta-ketoacyl-acyl-carrier-protein synthase III activity"/>
    <property type="evidence" value="ECO:0007669"/>
    <property type="project" value="UniProtKB-UniRule"/>
</dbReference>
<dbReference type="GO" id="GO:0006633">
    <property type="term" value="P:fatty acid biosynthetic process"/>
    <property type="evidence" value="ECO:0007669"/>
    <property type="project" value="UniProtKB-UniRule"/>
</dbReference>
<dbReference type="CDD" id="cd00830">
    <property type="entry name" value="KAS_III"/>
    <property type="match status" value="1"/>
</dbReference>
<dbReference type="FunFam" id="3.40.47.10:FF:000004">
    <property type="entry name" value="3-oxoacyl-[acyl-carrier-protein] synthase 3"/>
    <property type="match status" value="1"/>
</dbReference>
<dbReference type="Gene3D" id="3.40.47.10">
    <property type="match status" value="1"/>
</dbReference>
<dbReference type="HAMAP" id="MF_01815">
    <property type="entry name" value="FabH"/>
    <property type="match status" value="1"/>
</dbReference>
<dbReference type="InterPro" id="IPR013747">
    <property type="entry name" value="ACP_syn_III_C"/>
</dbReference>
<dbReference type="InterPro" id="IPR013751">
    <property type="entry name" value="ACP_syn_III_N"/>
</dbReference>
<dbReference type="InterPro" id="IPR004655">
    <property type="entry name" value="FabH"/>
</dbReference>
<dbReference type="InterPro" id="IPR016039">
    <property type="entry name" value="Thiolase-like"/>
</dbReference>
<dbReference type="NCBIfam" id="TIGR00747">
    <property type="entry name" value="fabH"/>
    <property type="match status" value="1"/>
</dbReference>
<dbReference type="NCBIfam" id="NF006829">
    <property type="entry name" value="PRK09352.1"/>
    <property type="match status" value="1"/>
</dbReference>
<dbReference type="PANTHER" id="PTHR43091">
    <property type="entry name" value="3-OXOACYL-[ACYL-CARRIER-PROTEIN] SYNTHASE"/>
    <property type="match status" value="1"/>
</dbReference>
<dbReference type="PANTHER" id="PTHR43091:SF1">
    <property type="entry name" value="BETA-KETOACYL-[ACYL-CARRIER-PROTEIN] SYNTHASE III, CHLOROPLASTIC"/>
    <property type="match status" value="1"/>
</dbReference>
<dbReference type="Pfam" id="PF08545">
    <property type="entry name" value="ACP_syn_III"/>
    <property type="match status" value="1"/>
</dbReference>
<dbReference type="Pfam" id="PF08541">
    <property type="entry name" value="ACP_syn_III_C"/>
    <property type="match status" value="1"/>
</dbReference>
<dbReference type="SUPFAM" id="SSF53901">
    <property type="entry name" value="Thiolase-like"/>
    <property type="match status" value="1"/>
</dbReference>
<organism>
    <name type="scientific">Lactococcus lactis subsp. cremoris (strain SK11)</name>
    <dbReference type="NCBI Taxonomy" id="272622"/>
    <lineage>
        <taxon>Bacteria</taxon>
        <taxon>Bacillati</taxon>
        <taxon>Bacillota</taxon>
        <taxon>Bacilli</taxon>
        <taxon>Lactobacillales</taxon>
        <taxon>Streptococcaceae</taxon>
        <taxon>Lactococcus</taxon>
        <taxon>Lactococcus cremoris subsp. cremoris</taxon>
    </lineage>
</organism>
<reference key="1">
    <citation type="journal article" date="2006" name="Proc. Natl. Acad. Sci. U.S.A.">
        <title>Comparative genomics of the lactic acid bacteria.</title>
        <authorList>
            <person name="Makarova K.S."/>
            <person name="Slesarev A."/>
            <person name="Wolf Y.I."/>
            <person name="Sorokin A."/>
            <person name="Mirkin B."/>
            <person name="Koonin E.V."/>
            <person name="Pavlov A."/>
            <person name="Pavlova N."/>
            <person name="Karamychev V."/>
            <person name="Polouchine N."/>
            <person name="Shakhova V."/>
            <person name="Grigoriev I."/>
            <person name="Lou Y."/>
            <person name="Rohksar D."/>
            <person name="Lucas S."/>
            <person name="Huang K."/>
            <person name="Goodstein D.M."/>
            <person name="Hawkins T."/>
            <person name="Plengvidhya V."/>
            <person name="Welker D."/>
            <person name="Hughes J."/>
            <person name="Goh Y."/>
            <person name="Benson A."/>
            <person name="Baldwin K."/>
            <person name="Lee J.-H."/>
            <person name="Diaz-Muniz I."/>
            <person name="Dosti B."/>
            <person name="Smeianov V."/>
            <person name="Wechter W."/>
            <person name="Barabote R."/>
            <person name="Lorca G."/>
            <person name="Altermann E."/>
            <person name="Barrangou R."/>
            <person name="Ganesan B."/>
            <person name="Xie Y."/>
            <person name="Rawsthorne H."/>
            <person name="Tamir D."/>
            <person name="Parker C."/>
            <person name="Breidt F."/>
            <person name="Broadbent J.R."/>
            <person name="Hutkins R."/>
            <person name="O'Sullivan D."/>
            <person name="Steele J."/>
            <person name="Unlu G."/>
            <person name="Saier M.H. Jr."/>
            <person name="Klaenhammer T."/>
            <person name="Richardson P."/>
            <person name="Kozyavkin S."/>
            <person name="Weimer B.C."/>
            <person name="Mills D.A."/>
        </authorList>
    </citation>
    <scope>NUCLEOTIDE SEQUENCE [LARGE SCALE GENOMIC DNA]</scope>
    <source>
        <strain>SK11</strain>
    </source>
</reference>
<keyword id="KW-0012">Acyltransferase</keyword>
<keyword id="KW-0963">Cytoplasm</keyword>
<keyword id="KW-0275">Fatty acid biosynthesis</keyword>
<keyword id="KW-0276">Fatty acid metabolism</keyword>
<keyword id="KW-0444">Lipid biosynthesis</keyword>
<keyword id="KW-0443">Lipid metabolism</keyword>
<keyword id="KW-0511">Multifunctional enzyme</keyword>
<keyword id="KW-0808">Transferase</keyword>
<comment type="function">
    <text evidence="1">Catalyzes the condensation reaction of fatty acid synthesis by the addition to an acyl acceptor of two carbons from malonyl-ACP. Catalyzes the first condensation reaction which initiates fatty acid synthesis and may therefore play a role in governing the total rate of fatty acid production. Possesses both acetoacetyl-ACP synthase and acetyl transacylase activities. Its substrate specificity determines the biosynthesis of branched-chain and/or straight-chain of fatty acids.</text>
</comment>
<comment type="catalytic activity">
    <reaction evidence="1">
        <text>malonyl-[ACP] + acetyl-CoA + H(+) = 3-oxobutanoyl-[ACP] + CO2 + CoA</text>
        <dbReference type="Rhea" id="RHEA:12080"/>
        <dbReference type="Rhea" id="RHEA-COMP:9623"/>
        <dbReference type="Rhea" id="RHEA-COMP:9625"/>
        <dbReference type="ChEBI" id="CHEBI:15378"/>
        <dbReference type="ChEBI" id="CHEBI:16526"/>
        <dbReference type="ChEBI" id="CHEBI:57287"/>
        <dbReference type="ChEBI" id="CHEBI:57288"/>
        <dbReference type="ChEBI" id="CHEBI:78449"/>
        <dbReference type="ChEBI" id="CHEBI:78450"/>
        <dbReference type="EC" id="2.3.1.180"/>
    </reaction>
</comment>
<comment type="pathway">
    <text evidence="1">Lipid metabolism; fatty acid biosynthesis.</text>
</comment>
<comment type="subunit">
    <text evidence="1">Homodimer.</text>
</comment>
<comment type="subcellular location">
    <subcellularLocation>
        <location evidence="1">Cytoplasm</location>
    </subcellularLocation>
</comment>
<comment type="domain">
    <text evidence="1">The last Arg residue of the ACP-binding site is essential for the weak association between ACP/AcpP and FabH.</text>
</comment>
<comment type="similarity">
    <text evidence="1">Belongs to the thiolase-like superfamily. FabH family.</text>
</comment>
<gene>
    <name evidence="1" type="primary">fabH</name>
    <name type="ordered locus">LACR_0821</name>
</gene>
<evidence type="ECO:0000255" key="1">
    <source>
        <dbReference type="HAMAP-Rule" id="MF_01815"/>
    </source>
</evidence>
<protein>
    <recommendedName>
        <fullName evidence="1">Beta-ketoacyl-[acyl-carrier-protein] synthase III</fullName>
        <shortName evidence="1">Beta-ketoacyl-ACP synthase III</shortName>
        <shortName evidence="1">KAS III</shortName>
        <ecNumber evidence="1">2.3.1.180</ecNumber>
    </recommendedName>
    <alternativeName>
        <fullName evidence="1">3-oxoacyl-[acyl-carrier-protein] synthase 3</fullName>
    </alternativeName>
    <alternativeName>
        <fullName evidence="1">3-oxoacyl-[acyl-carrier-protein] synthase III</fullName>
    </alternativeName>
</protein>
<proteinExistence type="inferred from homology"/>
<feature type="chain" id="PRO_1000056372" description="Beta-ketoacyl-[acyl-carrier-protein] synthase III">
    <location>
        <begin position="1"/>
        <end position="325"/>
    </location>
</feature>
<feature type="region of interest" description="ACP-binding" evidence="1">
    <location>
        <begin position="251"/>
        <end position="255"/>
    </location>
</feature>
<feature type="active site" evidence="1">
    <location>
        <position position="112"/>
    </location>
</feature>
<feature type="active site" evidence="1">
    <location>
        <position position="250"/>
    </location>
</feature>
<feature type="active site" evidence="1">
    <location>
        <position position="280"/>
    </location>
</feature>
<accession>Q030J8</accession>
<sequence>MTFAKITQAAHYVPENVVSNDDLSKIMDTNDEWIYSRTGIKNRHISTGENTSDLATKVAKQLIENSGVDPELIDFIIVATVTPDSMMPSTAARVQAQVGATNAFAYDLTAACSGFVFALSTAEKLISSGAYQRGIVIGAEVFSKVIDWSDRSTAVLFGDGAAGVLLDNSGSQPLIIAEKMQTDGKRGGSLLSSYADIQTPFASVSYEGSNLSMEGRAIFDFAVRDVPKNIQATLEKSDLAAEEIDYYLLHQANSRILDKMAKKLGVTRNKFLQNMQEYGNTSAASIPILLSESVKNGIFSLDGQTKVVLTGFGGGLTWGTAIINL</sequence>
<name>FABH_LACLS</name>